<name>Y181_BRASB</name>
<accession>A5E8I4</accession>
<feature type="chain" id="PRO_0000336135" description="UPF0102 protein BBta_0181">
    <location>
        <begin position="1"/>
        <end position="136"/>
    </location>
</feature>
<evidence type="ECO:0000255" key="1">
    <source>
        <dbReference type="HAMAP-Rule" id="MF_00048"/>
    </source>
</evidence>
<sequence>MAKAEHTSTAKPSKPAAPERVAAFRTGLSAEARAAALLIAKGYRILAKRFRTPHGEIDIIARKRDLVTFVEVKARASLDDAAYAVTPRQQQRIIDAAQAWLMTHPEHAEFELRFDAILVAPRSLPRHLIAAFDAST</sequence>
<dbReference type="EMBL" id="CP000494">
    <property type="protein sequence ID" value="ABQ32478.1"/>
    <property type="molecule type" value="Genomic_DNA"/>
</dbReference>
<dbReference type="RefSeq" id="WP_011942698.1">
    <property type="nucleotide sequence ID" value="NC_009485.1"/>
</dbReference>
<dbReference type="SMR" id="A5E8I4"/>
<dbReference type="STRING" id="288000.BBta_0181"/>
<dbReference type="KEGG" id="bbt:BBta_0181"/>
<dbReference type="eggNOG" id="COG0792">
    <property type="taxonomic scope" value="Bacteria"/>
</dbReference>
<dbReference type="HOGENOM" id="CLU_115353_0_2_5"/>
<dbReference type="OrthoDB" id="9812968at2"/>
<dbReference type="Proteomes" id="UP000000246">
    <property type="component" value="Chromosome"/>
</dbReference>
<dbReference type="GO" id="GO:0003676">
    <property type="term" value="F:nucleic acid binding"/>
    <property type="evidence" value="ECO:0007669"/>
    <property type="project" value="InterPro"/>
</dbReference>
<dbReference type="CDD" id="cd20736">
    <property type="entry name" value="PoNe_Nuclease"/>
    <property type="match status" value="1"/>
</dbReference>
<dbReference type="Gene3D" id="3.40.1350.10">
    <property type="match status" value="1"/>
</dbReference>
<dbReference type="HAMAP" id="MF_00048">
    <property type="entry name" value="UPF0102"/>
    <property type="match status" value="1"/>
</dbReference>
<dbReference type="InterPro" id="IPR011335">
    <property type="entry name" value="Restrct_endonuc-II-like"/>
</dbReference>
<dbReference type="InterPro" id="IPR011856">
    <property type="entry name" value="tRNA_endonuc-like_dom_sf"/>
</dbReference>
<dbReference type="InterPro" id="IPR003509">
    <property type="entry name" value="UPF0102_YraN-like"/>
</dbReference>
<dbReference type="NCBIfam" id="NF009151">
    <property type="entry name" value="PRK12497.1-5"/>
    <property type="match status" value="1"/>
</dbReference>
<dbReference type="NCBIfam" id="TIGR00252">
    <property type="entry name" value="YraN family protein"/>
    <property type="match status" value="1"/>
</dbReference>
<dbReference type="PANTHER" id="PTHR34039">
    <property type="entry name" value="UPF0102 PROTEIN YRAN"/>
    <property type="match status" value="1"/>
</dbReference>
<dbReference type="PANTHER" id="PTHR34039:SF1">
    <property type="entry name" value="UPF0102 PROTEIN YRAN"/>
    <property type="match status" value="1"/>
</dbReference>
<dbReference type="Pfam" id="PF02021">
    <property type="entry name" value="UPF0102"/>
    <property type="match status" value="1"/>
</dbReference>
<dbReference type="SUPFAM" id="SSF52980">
    <property type="entry name" value="Restriction endonuclease-like"/>
    <property type="match status" value="1"/>
</dbReference>
<proteinExistence type="inferred from homology"/>
<comment type="similarity">
    <text evidence="1">Belongs to the UPF0102 family.</text>
</comment>
<protein>
    <recommendedName>
        <fullName evidence="1">UPF0102 protein BBta_0181</fullName>
    </recommendedName>
</protein>
<keyword id="KW-1185">Reference proteome</keyword>
<reference key="1">
    <citation type="journal article" date="2007" name="Science">
        <title>Legumes symbioses: absence of nod genes in photosynthetic bradyrhizobia.</title>
        <authorList>
            <person name="Giraud E."/>
            <person name="Moulin L."/>
            <person name="Vallenet D."/>
            <person name="Barbe V."/>
            <person name="Cytryn E."/>
            <person name="Avarre J.-C."/>
            <person name="Jaubert M."/>
            <person name="Simon D."/>
            <person name="Cartieaux F."/>
            <person name="Prin Y."/>
            <person name="Bena G."/>
            <person name="Hannibal L."/>
            <person name="Fardoux J."/>
            <person name="Kojadinovic M."/>
            <person name="Vuillet L."/>
            <person name="Lajus A."/>
            <person name="Cruveiller S."/>
            <person name="Rouy Z."/>
            <person name="Mangenot S."/>
            <person name="Segurens B."/>
            <person name="Dossat C."/>
            <person name="Franck W.L."/>
            <person name="Chang W.-S."/>
            <person name="Saunders E."/>
            <person name="Bruce D."/>
            <person name="Richardson P."/>
            <person name="Normand P."/>
            <person name="Dreyfus B."/>
            <person name="Pignol D."/>
            <person name="Stacey G."/>
            <person name="Emerich D."/>
            <person name="Vermeglio A."/>
            <person name="Medigue C."/>
            <person name="Sadowsky M."/>
        </authorList>
    </citation>
    <scope>NUCLEOTIDE SEQUENCE [LARGE SCALE GENOMIC DNA]</scope>
    <source>
        <strain>BTAi1 / ATCC BAA-1182</strain>
    </source>
</reference>
<gene>
    <name type="ordered locus">BBta_0181</name>
</gene>
<organism>
    <name type="scientific">Bradyrhizobium sp. (strain BTAi1 / ATCC BAA-1182)</name>
    <dbReference type="NCBI Taxonomy" id="288000"/>
    <lineage>
        <taxon>Bacteria</taxon>
        <taxon>Pseudomonadati</taxon>
        <taxon>Pseudomonadota</taxon>
        <taxon>Alphaproteobacteria</taxon>
        <taxon>Hyphomicrobiales</taxon>
        <taxon>Nitrobacteraceae</taxon>
        <taxon>Bradyrhizobium</taxon>
    </lineage>
</organism>